<keyword id="KW-0093">Biotin biosynthesis</keyword>
<keyword id="KW-0663">Pyridoxal phosphate</keyword>
<keyword id="KW-0808">Transferase</keyword>
<reference key="1">
    <citation type="journal article" date="2010" name="Genome Biol. Evol.">
        <title>Continuing evolution of Burkholderia mallei through genome reduction and large-scale rearrangements.</title>
        <authorList>
            <person name="Losada L."/>
            <person name="Ronning C.M."/>
            <person name="DeShazer D."/>
            <person name="Woods D."/>
            <person name="Fedorova N."/>
            <person name="Kim H.S."/>
            <person name="Shabalina S.A."/>
            <person name="Pearson T.R."/>
            <person name="Brinkac L."/>
            <person name="Tan P."/>
            <person name="Nandi T."/>
            <person name="Crabtree J."/>
            <person name="Badger J."/>
            <person name="Beckstrom-Sternberg S."/>
            <person name="Saqib M."/>
            <person name="Schutzer S.E."/>
            <person name="Keim P."/>
            <person name="Nierman W.C."/>
        </authorList>
    </citation>
    <scope>NUCLEOTIDE SEQUENCE [LARGE SCALE GENOMIC DNA]</scope>
    <source>
        <strain>NCTC 10229</strain>
    </source>
</reference>
<gene>
    <name evidence="1" type="primary">bioF</name>
    <name type="ordered locus">BMA10229_A2015</name>
</gene>
<comment type="function">
    <text evidence="1">Catalyzes the decarboxylative condensation of pimeloyl-[acyl-carrier protein] and L-alanine to produce 8-amino-7-oxononanoate (AON), [acyl-carrier protein], and carbon dioxide.</text>
</comment>
<comment type="catalytic activity">
    <reaction evidence="1">
        <text>6-carboxyhexanoyl-[ACP] + L-alanine + H(+) = (8S)-8-amino-7-oxononanoate + holo-[ACP] + CO2</text>
        <dbReference type="Rhea" id="RHEA:42288"/>
        <dbReference type="Rhea" id="RHEA-COMP:9685"/>
        <dbReference type="Rhea" id="RHEA-COMP:9955"/>
        <dbReference type="ChEBI" id="CHEBI:15378"/>
        <dbReference type="ChEBI" id="CHEBI:16526"/>
        <dbReference type="ChEBI" id="CHEBI:57972"/>
        <dbReference type="ChEBI" id="CHEBI:64479"/>
        <dbReference type="ChEBI" id="CHEBI:78846"/>
        <dbReference type="ChEBI" id="CHEBI:149468"/>
        <dbReference type="EC" id="2.3.1.47"/>
    </reaction>
</comment>
<comment type="cofactor">
    <cofactor evidence="1">
        <name>pyridoxal 5'-phosphate</name>
        <dbReference type="ChEBI" id="CHEBI:597326"/>
    </cofactor>
</comment>
<comment type="pathway">
    <text evidence="1">Cofactor biosynthesis; biotin biosynthesis.</text>
</comment>
<comment type="subunit">
    <text evidence="1">Homodimer.</text>
</comment>
<comment type="similarity">
    <text evidence="1">Belongs to the class-II pyridoxal-phosphate-dependent aminotransferase family. BioF subfamily.</text>
</comment>
<accession>A2S7R1</accession>
<feature type="chain" id="PRO_0000380935" description="8-amino-7-oxononanoate synthase">
    <location>
        <begin position="1"/>
        <end position="394"/>
    </location>
</feature>
<feature type="binding site" evidence="1">
    <location>
        <position position="21"/>
    </location>
    <ligand>
        <name>substrate</name>
    </ligand>
</feature>
<feature type="binding site" evidence="1">
    <location>
        <begin position="112"/>
        <end position="113"/>
    </location>
    <ligand>
        <name>pyridoxal 5'-phosphate</name>
        <dbReference type="ChEBI" id="CHEBI:597326"/>
    </ligand>
</feature>
<feature type="binding site" evidence="1">
    <location>
        <position position="137"/>
    </location>
    <ligand>
        <name>substrate</name>
    </ligand>
</feature>
<feature type="binding site" evidence="1">
    <location>
        <position position="183"/>
    </location>
    <ligand>
        <name>pyridoxal 5'-phosphate</name>
        <dbReference type="ChEBI" id="CHEBI:597326"/>
    </ligand>
</feature>
<feature type="binding site" evidence="1">
    <location>
        <position position="211"/>
    </location>
    <ligand>
        <name>pyridoxal 5'-phosphate</name>
        <dbReference type="ChEBI" id="CHEBI:597326"/>
    </ligand>
</feature>
<feature type="binding site" evidence="1">
    <location>
        <position position="239"/>
    </location>
    <ligand>
        <name>pyridoxal 5'-phosphate</name>
        <dbReference type="ChEBI" id="CHEBI:597326"/>
    </ligand>
</feature>
<feature type="binding site" evidence="1">
    <location>
        <position position="358"/>
    </location>
    <ligand>
        <name>substrate</name>
    </ligand>
</feature>
<feature type="modified residue" description="N6-(pyridoxal phosphate)lysine" evidence="1">
    <location>
        <position position="242"/>
    </location>
</feature>
<name>BIOF_BURM9</name>
<dbReference type="EC" id="2.3.1.47" evidence="1"/>
<dbReference type="EMBL" id="CP000546">
    <property type="protein sequence ID" value="ABN02909.1"/>
    <property type="molecule type" value="Genomic_DNA"/>
</dbReference>
<dbReference type="RefSeq" id="WP_004189736.1">
    <property type="nucleotide sequence ID" value="NC_008836.1"/>
</dbReference>
<dbReference type="SMR" id="A2S7R1"/>
<dbReference type="GeneID" id="93058884"/>
<dbReference type="KEGG" id="bml:BMA10229_A2015"/>
<dbReference type="HOGENOM" id="CLU_015846_11_2_4"/>
<dbReference type="UniPathway" id="UPA00078"/>
<dbReference type="Proteomes" id="UP000002283">
    <property type="component" value="Chromosome I"/>
</dbReference>
<dbReference type="GO" id="GO:0008710">
    <property type="term" value="F:8-amino-7-oxononanoate synthase activity"/>
    <property type="evidence" value="ECO:0007669"/>
    <property type="project" value="UniProtKB-UniRule"/>
</dbReference>
<dbReference type="GO" id="GO:0030170">
    <property type="term" value="F:pyridoxal phosphate binding"/>
    <property type="evidence" value="ECO:0007669"/>
    <property type="project" value="UniProtKB-UniRule"/>
</dbReference>
<dbReference type="GO" id="GO:0009102">
    <property type="term" value="P:biotin biosynthetic process"/>
    <property type="evidence" value="ECO:0007669"/>
    <property type="project" value="UniProtKB-UniRule"/>
</dbReference>
<dbReference type="Gene3D" id="3.90.1150.10">
    <property type="entry name" value="Aspartate Aminotransferase, domain 1"/>
    <property type="match status" value="1"/>
</dbReference>
<dbReference type="Gene3D" id="3.40.640.10">
    <property type="entry name" value="Type I PLP-dependent aspartate aminotransferase-like (Major domain)"/>
    <property type="match status" value="1"/>
</dbReference>
<dbReference type="HAMAP" id="MF_01693">
    <property type="entry name" value="BioF_aminotrans_2"/>
    <property type="match status" value="1"/>
</dbReference>
<dbReference type="InterPro" id="IPR004839">
    <property type="entry name" value="Aminotransferase_I/II_large"/>
</dbReference>
<dbReference type="InterPro" id="IPR050087">
    <property type="entry name" value="AON_synthase_class-II"/>
</dbReference>
<dbReference type="InterPro" id="IPR004723">
    <property type="entry name" value="AONS_Archaea/Proteobacteria"/>
</dbReference>
<dbReference type="InterPro" id="IPR022834">
    <property type="entry name" value="AONS_Proteobacteria"/>
</dbReference>
<dbReference type="InterPro" id="IPR015424">
    <property type="entry name" value="PyrdxlP-dep_Trfase"/>
</dbReference>
<dbReference type="InterPro" id="IPR015421">
    <property type="entry name" value="PyrdxlP-dep_Trfase_major"/>
</dbReference>
<dbReference type="InterPro" id="IPR015422">
    <property type="entry name" value="PyrdxlP-dep_Trfase_small"/>
</dbReference>
<dbReference type="NCBIfam" id="TIGR00858">
    <property type="entry name" value="bioF"/>
    <property type="match status" value="1"/>
</dbReference>
<dbReference type="PANTHER" id="PTHR13693:SF100">
    <property type="entry name" value="8-AMINO-7-OXONONANOATE SYNTHASE"/>
    <property type="match status" value="1"/>
</dbReference>
<dbReference type="PANTHER" id="PTHR13693">
    <property type="entry name" value="CLASS II AMINOTRANSFERASE/8-AMINO-7-OXONONANOATE SYNTHASE"/>
    <property type="match status" value="1"/>
</dbReference>
<dbReference type="Pfam" id="PF00155">
    <property type="entry name" value="Aminotran_1_2"/>
    <property type="match status" value="1"/>
</dbReference>
<dbReference type="SUPFAM" id="SSF53383">
    <property type="entry name" value="PLP-dependent transferases"/>
    <property type="match status" value="1"/>
</dbReference>
<sequence>MNPLATLEQGLADIDAQGLRRCRRVADTACGAHMTVDGRAIIGFASNDYLGLAAHPRLVEAFAEGARRYGSGSGGSHLLGGHSRAHATLEDELAAFSGGFSDAPRALYFSTGYMANLAALTALAGRGATIFSDALNHASLIDGARLSRANVQIYPHGDADALDARLRACDAPTKLIVSDTVFSMDGDVAPLARLVALAETHGAWLVVDDAHGFGVLGPQGRGALAAHGLRSPNLVYVGTLGKAAGVAGAFVVAHETVIEWLVQRARSYIFTTAAPPSVACAVSASLAVIASDEGDARRAHLGALIKRTRAILRATHWQPVDSHTAVQPLVIGSNEATLAAMAALDAQGLWVPAIRPPTVPAGTSRLRISLSAAHSFDDLARLEAALVTPIGAAA</sequence>
<protein>
    <recommendedName>
        <fullName evidence="1">8-amino-7-oxononanoate synthase</fullName>
        <shortName evidence="1">AONS</shortName>
        <ecNumber evidence="1">2.3.1.47</ecNumber>
    </recommendedName>
    <alternativeName>
        <fullName evidence="1">7-keto-8-amino-pelargonic acid synthase</fullName>
        <shortName evidence="1">7-KAP synthase</shortName>
        <shortName evidence="1">KAPA synthase</shortName>
    </alternativeName>
    <alternativeName>
        <fullName evidence="1">8-amino-7-ketopelargonate synthase</fullName>
    </alternativeName>
</protein>
<evidence type="ECO:0000255" key="1">
    <source>
        <dbReference type="HAMAP-Rule" id="MF_01693"/>
    </source>
</evidence>
<organism>
    <name type="scientific">Burkholderia mallei (strain NCTC 10229)</name>
    <dbReference type="NCBI Taxonomy" id="412022"/>
    <lineage>
        <taxon>Bacteria</taxon>
        <taxon>Pseudomonadati</taxon>
        <taxon>Pseudomonadota</taxon>
        <taxon>Betaproteobacteria</taxon>
        <taxon>Burkholderiales</taxon>
        <taxon>Burkholderiaceae</taxon>
        <taxon>Burkholderia</taxon>
        <taxon>pseudomallei group</taxon>
    </lineage>
</organism>
<proteinExistence type="inferred from homology"/>